<evidence type="ECO:0000269" key="1">
    <source>
    </source>
</evidence>
<evidence type="ECO:0000303" key="2">
    <source>
    </source>
</evidence>
<evidence type="ECO:0000303" key="3">
    <source>
    </source>
</evidence>
<evidence type="ECO:0000305" key="4"/>
<comment type="interaction">
    <interactant intactId="EBI-17702098">
        <id>Q8IV33</id>
    </interactant>
    <interactant intactId="EBI-12593112">
        <id>O75190-2</id>
        <label>DNAJB6</label>
    </interactant>
    <organismsDiffer>false</organismsDiffer>
    <experiments>3</experiments>
</comment>
<comment type="interaction">
    <interactant intactId="EBI-17702098">
        <id>Q8IV33</id>
    </interactant>
    <interactant intactId="EBI-740220">
        <id>O14964</id>
        <label>HGS</label>
    </interactant>
    <organismsDiffer>false</organismsDiffer>
    <experiments>3</experiments>
</comment>
<comment type="interaction">
    <interactant intactId="EBI-17702098">
        <id>Q8IV33</id>
    </interactant>
    <interactant intactId="EBI-948266">
        <id>O14901</id>
        <label>KLF11</label>
    </interactant>
    <organismsDiffer>false</organismsDiffer>
    <experiments>3</experiments>
</comment>
<comment type="interaction">
    <interactant intactId="EBI-17702098">
        <id>Q8IV33</id>
    </interactant>
    <interactant intactId="EBI-748974">
        <id>Q96CV9</id>
        <label>OPTN</label>
    </interactant>
    <organismsDiffer>false</organismsDiffer>
    <experiments>3</experiments>
</comment>
<comment type="alternative products">
    <event type="alternative splicing"/>
    <isoform>
        <id>Q8IV33-1</id>
        <name>1</name>
        <sequence type="displayed"/>
    </isoform>
    <isoform>
        <id>Q8IV33-2</id>
        <name>2</name>
        <sequence type="described" ref="VSP_039414 VSP_039415"/>
    </isoform>
    <isoform>
        <id>Q8IV33-3</id>
        <name>3</name>
        <sequence type="described" ref="VSP_039416 VSP_039417 VSP_039418"/>
    </isoform>
</comment>
<comment type="disease" evidence="1">
    <disease id="DI-05613">
        <name>Polydactyly, postaxial, A10</name>
        <acronym>PAPA10</acronym>
        <description>A form of postaxial polydactyly, a condition characterized by the occurrence of supernumerary digits in the upper and/or lower extremities. In postaxial polydactyly type A, the extra digit is well-formed and articulates with the fifth or a sixth metacarpal/metatarsal. PAPA10 is an autosomal recessive condition characterized by one or more postaxial digits of the hands and/or feet. A rudimentary digit (PAP type B) may also be present. Intrafamilial variability has been observed.</description>
        <dbReference type="MIM" id="618498"/>
    </disease>
    <text>The disease may be caused by variants affecting the gene represented in this entry.</text>
</comment>
<comment type="sequence caution" evidence="4">
    <conflict type="erroneous initiation">
        <sequence resource="EMBL-CDS" id="BAC85469"/>
    </conflict>
    <text>Truncated N-terminus.</text>
</comment>
<comment type="sequence caution" evidence="4">
    <conflict type="miscellaneous discrepancy">
        <sequence resource="EMBL" id="BF514032"/>
    </conflict>
    <text>Contaminating sequence. Sequence of unknown origin in the N-terminal part.</text>
</comment>
<reference key="1">
    <citation type="journal article" date="2004" name="Nature">
        <title>The DNA sequence and comparative analysis of human chromosome 5.</title>
        <authorList>
            <person name="Schmutz J."/>
            <person name="Martin J."/>
            <person name="Terry A."/>
            <person name="Couronne O."/>
            <person name="Grimwood J."/>
            <person name="Lowry S."/>
            <person name="Gordon L.A."/>
            <person name="Scott D."/>
            <person name="Xie G."/>
            <person name="Huang W."/>
            <person name="Hellsten U."/>
            <person name="Tran-Gyamfi M."/>
            <person name="She X."/>
            <person name="Prabhakar S."/>
            <person name="Aerts A."/>
            <person name="Altherr M."/>
            <person name="Bajorek E."/>
            <person name="Black S."/>
            <person name="Branscomb E."/>
            <person name="Caoile C."/>
            <person name="Challacombe J.F."/>
            <person name="Chan Y.M."/>
            <person name="Denys M."/>
            <person name="Detter J.C."/>
            <person name="Escobar J."/>
            <person name="Flowers D."/>
            <person name="Fotopulos D."/>
            <person name="Glavina T."/>
            <person name="Gomez M."/>
            <person name="Gonzales E."/>
            <person name="Goodstein D."/>
            <person name="Grigoriev I."/>
            <person name="Groza M."/>
            <person name="Hammon N."/>
            <person name="Hawkins T."/>
            <person name="Haydu L."/>
            <person name="Israni S."/>
            <person name="Jett J."/>
            <person name="Kadner K."/>
            <person name="Kimball H."/>
            <person name="Kobayashi A."/>
            <person name="Lopez F."/>
            <person name="Lou Y."/>
            <person name="Martinez D."/>
            <person name="Medina C."/>
            <person name="Morgan J."/>
            <person name="Nandkeshwar R."/>
            <person name="Noonan J.P."/>
            <person name="Pitluck S."/>
            <person name="Pollard M."/>
            <person name="Predki P."/>
            <person name="Priest J."/>
            <person name="Ramirez L."/>
            <person name="Retterer J."/>
            <person name="Rodriguez A."/>
            <person name="Rogers S."/>
            <person name="Salamov A."/>
            <person name="Salazar A."/>
            <person name="Thayer N."/>
            <person name="Tice H."/>
            <person name="Tsai M."/>
            <person name="Ustaszewska A."/>
            <person name="Vo N."/>
            <person name="Wheeler J."/>
            <person name="Wu K."/>
            <person name="Yang J."/>
            <person name="Dickson M."/>
            <person name="Cheng J.-F."/>
            <person name="Eichler E.E."/>
            <person name="Olsen A."/>
            <person name="Pennacchio L.A."/>
            <person name="Rokhsar D.S."/>
            <person name="Richardson P."/>
            <person name="Lucas S.M."/>
            <person name="Myers R.M."/>
            <person name="Rubin E.M."/>
        </authorList>
    </citation>
    <scope>NUCLEOTIDE SEQUENCE [LARGE SCALE GENOMIC DNA]</scope>
    <source>
        <tissue>Brain</tissue>
    </source>
</reference>
<reference key="2">
    <citation type="submission" date="2005-07" db="EMBL/GenBank/DDBJ databases">
        <authorList>
            <person name="Mural R.J."/>
            <person name="Istrail S."/>
            <person name="Sutton G.G."/>
            <person name="Florea L."/>
            <person name="Halpern A.L."/>
            <person name="Mobarry C.M."/>
            <person name="Lippert R."/>
            <person name="Walenz B."/>
            <person name="Shatkay H."/>
            <person name="Dew I."/>
            <person name="Miller J.R."/>
            <person name="Flanigan M.J."/>
            <person name="Edwards N.J."/>
            <person name="Bolanos R."/>
            <person name="Fasulo D."/>
            <person name="Halldorsson B.V."/>
            <person name="Hannenhalli S."/>
            <person name="Turner R."/>
            <person name="Yooseph S."/>
            <person name="Lu F."/>
            <person name="Nusskern D.R."/>
            <person name="Shue B.C."/>
            <person name="Zheng X.H."/>
            <person name="Zhong F."/>
            <person name="Delcher A.L."/>
            <person name="Huson D.H."/>
            <person name="Kravitz S.A."/>
            <person name="Mouchard L."/>
            <person name="Reinert K."/>
            <person name="Remington K.A."/>
            <person name="Clark A.G."/>
            <person name="Waterman M.S."/>
            <person name="Eichler E.E."/>
            <person name="Adams M.D."/>
            <person name="Hunkapiller M.W."/>
            <person name="Myers E.W."/>
            <person name="Venter J.C."/>
        </authorList>
    </citation>
    <scope>NUCLEOTIDE SEQUENCE [LARGE SCALE GENOMIC DNA]</scope>
</reference>
<reference key="3">
    <citation type="journal article" date="2004" name="Genome Res.">
        <title>The status, quality, and expansion of the NIH full-length cDNA project: the Mammalian Gene Collection (MGC).</title>
        <authorList>
            <consortium name="The MGC Project Team"/>
        </authorList>
    </citation>
    <scope>NUCLEOTIDE SEQUENCE [LARGE SCALE MRNA] (ISOFORM 2)</scope>
    <scope>NUCLEOTIDE SEQUENCE [LARGE SCALE MRNA] OF 864-1021 (ISOFORM 1)</scope>
    <source>
        <tissue>Lung</tissue>
    </source>
</reference>
<reference key="4">
    <citation type="journal article" date="1998" name="DNA Res.">
        <title>Prediction of the coding sequences of unidentified human genes. XII. The complete sequences of 100 new cDNA clones from brain which code for large proteins in vitro.</title>
        <authorList>
            <person name="Nagase T."/>
            <person name="Ishikawa K."/>
            <person name="Suyama M."/>
            <person name="Kikuno R."/>
            <person name="Hirosawa M."/>
            <person name="Miyajima N."/>
            <person name="Tanaka A."/>
            <person name="Kotani H."/>
            <person name="Nomura N."/>
            <person name="Ohara O."/>
        </authorList>
    </citation>
    <scope>NUCLEOTIDE SEQUENCE [LARGE SCALE MRNA] OF 386-1275 (ISOFORM 3)</scope>
    <source>
        <tissue>Brain</tissue>
    </source>
</reference>
<reference key="5">
    <citation type="journal article" date="2004" name="Nat. Genet.">
        <title>Complete sequencing and characterization of 21,243 full-length human cDNAs.</title>
        <authorList>
            <person name="Ota T."/>
            <person name="Suzuki Y."/>
            <person name="Nishikawa T."/>
            <person name="Otsuki T."/>
            <person name="Sugiyama T."/>
            <person name="Irie R."/>
            <person name="Wakamatsu A."/>
            <person name="Hayashi K."/>
            <person name="Sato H."/>
            <person name="Nagai K."/>
            <person name="Kimura K."/>
            <person name="Makita H."/>
            <person name="Sekine M."/>
            <person name="Obayashi M."/>
            <person name="Nishi T."/>
            <person name="Shibahara T."/>
            <person name="Tanaka T."/>
            <person name="Ishii S."/>
            <person name="Yamamoto J."/>
            <person name="Saito K."/>
            <person name="Kawai Y."/>
            <person name="Isono Y."/>
            <person name="Nakamura Y."/>
            <person name="Nagahari K."/>
            <person name="Murakami K."/>
            <person name="Yasuda T."/>
            <person name="Iwayanagi T."/>
            <person name="Wagatsuma M."/>
            <person name="Shiratori A."/>
            <person name="Sudo H."/>
            <person name="Hosoiri T."/>
            <person name="Kaku Y."/>
            <person name="Kodaira H."/>
            <person name="Kondo H."/>
            <person name="Sugawara M."/>
            <person name="Takahashi M."/>
            <person name="Kanda K."/>
            <person name="Yokoi T."/>
            <person name="Furuya T."/>
            <person name="Kikkawa E."/>
            <person name="Omura Y."/>
            <person name="Abe K."/>
            <person name="Kamihara K."/>
            <person name="Katsuta N."/>
            <person name="Sato K."/>
            <person name="Tanikawa M."/>
            <person name="Yamazaki M."/>
            <person name="Ninomiya K."/>
            <person name="Ishibashi T."/>
            <person name="Yamashita H."/>
            <person name="Murakawa K."/>
            <person name="Fujimori K."/>
            <person name="Tanai H."/>
            <person name="Kimata M."/>
            <person name="Watanabe M."/>
            <person name="Hiraoka S."/>
            <person name="Chiba Y."/>
            <person name="Ishida S."/>
            <person name="Ono Y."/>
            <person name="Takiguchi S."/>
            <person name="Watanabe S."/>
            <person name="Yosida M."/>
            <person name="Hotuta T."/>
            <person name="Kusano J."/>
            <person name="Kanehori K."/>
            <person name="Takahashi-Fujii A."/>
            <person name="Hara H."/>
            <person name="Tanase T.-O."/>
            <person name="Nomura Y."/>
            <person name="Togiya S."/>
            <person name="Komai F."/>
            <person name="Hara R."/>
            <person name="Takeuchi K."/>
            <person name="Arita M."/>
            <person name="Imose N."/>
            <person name="Musashino K."/>
            <person name="Yuuki H."/>
            <person name="Oshima A."/>
            <person name="Sasaki N."/>
            <person name="Aotsuka S."/>
            <person name="Yoshikawa Y."/>
            <person name="Matsunawa H."/>
            <person name="Ichihara T."/>
            <person name="Shiohata N."/>
            <person name="Sano S."/>
            <person name="Moriya S."/>
            <person name="Momiyama H."/>
            <person name="Satoh N."/>
            <person name="Takami S."/>
            <person name="Terashima Y."/>
            <person name="Suzuki O."/>
            <person name="Nakagawa S."/>
            <person name="Senoh A."/>
            <person name="Mizoguchi H."/>
            <person name="Goto Y."/>
            <person name="Shimizu F."/>
            <person name="Wakebe H."/>
            <person name="Hishigaki H."/>
            <person name="Watanabe T."/>
            <person name="Sugiyama A."/>
            <person name="Takemoto M."/>
            <person name="Kawakami B."/>
            <person name="Yamazaki M."/>
            <person name="Watanabe K."/>
            <person name="Kumagai A."/>
            <person name="Itakura S."/>
            <person name="Fukuzumi Y."/>
            <person name="Fujimori Y."/>
            <person name="Komiyama M."/>
            <person name="Tashiro H."/>
            <person name="Tanigami A."/>
            <person name="Fujiwara T."/>
            <person name="Ono T."/>
            <person name="Yamada K."/>
            <person name="Fujii Y."/>
            <person name="Ozaki K."/>
            <person name="Hirao M."/>
            <person name="Ohmori Y."/>
            <person name="Kawabata A."/>
            <person name="Hikiji T."/>
            <person name="Kobatake N."/>
            <person name="Inagaki H."/>
            <person name="Ikema Y."/>
            <person name="Okamoto S."/>
            <person name="Okitani R."/>
            <person name="Kawakami T."/>
            <person name="Noguchi S."/>
            <person name="Itoh T."/>
            <person name="Shigeta K."/>
            <person name="Senba T."/>
            <person name="Matsumura K."/>
            <person name="Nakajima Y."/>
            <person name="Mizuno T."/>
            <person name="Morinaga M."/>
            <person name="Sasaki M."/>
            <person name="Togashi T."/>
            <person name="Oyama M."/>
            <person name="Hata H."/>
            <person name="Watanabe M."/>
            <person name="Komatsu T."/>
            <person name="Mizushima-Sugano J."/>
            <person name="Satoh T."/>
            <person name="Shirai Y."/>
            <person name="Takahashi Y."/>
            <person name="Nakagawa K."/>
            <person name="Okumura K."/>
            <person name="Nagase T."/>
            <person name="Nomura N."/>
            <person name="Kikuchi H."/>
            <person name="Masuho Y."/>
            <person name="Yamashita R."/>
            <person name="Nakai K."/>
            <person name="Yada T."/>
            <person name="Nakamura Y."/>
            <person name="Ohara O."/>
            <person name="Isogai T."/>
            <person name="Sugano S."/>
        </authorList>
    </citation>
    <scope>NUCLEOTIDE SEQUENCE [LARGE SCALE MRNA] OF 1041-1275</scope>
    <source>
        <tissue>Uterus</tissue>
    </source>
</reference>
<reference key="6">
    <citation type="journal article" date="2019" name="Hum. Genet.">
        <title>Variants in KIAA0825 underlie autosomal recessive postaxial polydactyly.</title>
        <authorList>
            <person name="Ullah I."/>
            <person name="Kakar N."/>
            <person name="Schrauwen I."/>
            <person name="Hussain S."/>
            <person name="Chakchouk I."/>
            <person name="Liaqat K."/>
            <person name="Acharya A."/>
            <person name="Wasif N."/>
            <person name="Santos-Cortez R.L.P."/>
            <person name="Khan S."/>
            <person name="Aziz A."/>
            <person name="Lee K."/>
            <person name="Couthouis J."/>
            <person name="Horn D."/>
            <person name="Kragesteen B.K."/>
            <person name="Spielmann M."/>
            <person name="Thiele H."/>
            <person name="Nickerson D.A."/>
            <person name="Bamshad M.J."/>
            <person name="Gitler A.D."/>
            <person name="Ahmad J."/>
            <person name="Ansar M."/>
            <person name="Borck G."/>
            <person name="Ahmad W."/>
            <person name="Leal S.M."/>
        </authorList>
    </citation>
    <scope>INVOLVEMENT IN PAPA10</scope>
    <scope>VARIANT PAPA10 725-LYS--GLN-1275 DEL</scope>
</reference>
<sequence>MDWDDEYSHNSFDLHCLLNSFPGDLEFEQIFSDIDEKIEQNAASIKHCIKEIQSEINKQCPGVQLQTTTDCFEWLTNYNYSTSESSFISHGDLIKFFKTLQDLLKNEQNQEEMTLDLLWDLSCHSSVSFPSTLSGTSFHFLSRTSLHSVEDNSSMDVKSMWDDIRLHLRRFLVSKLQSHNEINNSQQKILLKKQCLQQLLFLYPESEVIIKYQNIQNKLLANLLWNCFPSYNRDSNLDVIAHGYQSTMLKLYSVIKEDFNTLCEILAPSSMVKFIKETYLDTVTEEMAKFLENFCELQFRENAVRVVKTSKSSSKHRGAVHALVTTECPQKGRNFSLPLDKVEFLSQLIKSFMKLEKGVQELFDEILLSLKITRDTSGILEKSDREVVMEKPRANETNIPSEQSLPGKEATLLDFGWRSAFKEVSLPMAHCVVTAIEGFSTKILQQEQNERSSAVSYAMNLVNVQQVWQDSHMFPEEEQPKKIGKFCSDIMEKLDTMLPLALACRDDSFQEIRANLVEACCKVATAVLQRLQERAKEVPSKAPLKNLHTYLSTAVYVFQHFKRYDNLMKEMTKKPIFLVLVQRYQEFINTLQFQVTNYCVRVCATSILQDAESHHWDDYKAFYEGERCSFSIQMWHYFCWSLHYDLWTILPPKLAQEILVEVLEKSLSLLASRYARAHPSRKRTPQLRLDVTTILICTENMLWSVCTSVQKLLNPHQHTDDKIFKIHTHCNNLFTTLVILTSPLTELYKTFQHGLDESASDSLKSFFKQPLYWVSCISHFYPSLLRTPSAGGLKAEGQLKLLLSQPRCNWNLLLETLLHHDGLLLRILLKSSKQVSDTENNLNQGPSLMEAIFKILYHCSFSPQTFANVFVSYMEEEQLWDFLYNIPVSTCVEYELEVIRCLRLALTDAIKDTVQQIVSVMSSRRNCETNLNKHIVPDCLLESMPKEWNYSPKETNRKESCKSFTRLTAQAVSIVISKLPTVIACLPPPVKYFFFLSERKMSKKFVELKKAGLLVWNLIVIICRIFEDGNTVELLTGASLDRWSKEKLGLICMCLKSIMGDQTSIHNQMIQKVIQSIEQQKPNWIERQLLKARKLSTECAFMTIEKSTALQEGDVALELTEQKINTMVLDLCHKPGGREYLRQIYHIMQLNEEYLKEQLFSMNSSEEKPLPIRPLKTTLRSIEDQPSAFNPFHVYKAFSENMLDQSAITKWNWNWAKLLPNYLRLDKMTFSVLLKNRWEMKKDETLEEEEKAILEHLKQICTPQNSSASDNIEEQ</sequence>
<dbReference type="EMBL" id="AC010448">
    <property type="status" value="NOT_ANNOTATED_CDS"/>
    <property type="molecule type" value="Genomic_DNA"/>
</dbReference>
<dbReference type="EMBL" id="AC025766">
    <property type="status" value="NOT_ANNOTATED_CDS"/>
    <property type="molecule type" value="Genomic_DNA"/>
</dbReference>
<dbReference type="EMBL" id="AC093311">
    <property type="status" value="NOT_ANNOTATED_CDS"/>
    <property type="molecule type" value="Genomic_DNA"/>
</dbReference>
<dbReference type="EMBL" id="AC104127">
    <property type="status" value="NOT_ANNOTATED_CDS"/>
    <property type="molecule type" value="Genomic_DNA"/>
</dbReference>
<dbReference type="EMBL" id="AC117521">
    <property type="status" value="NOT_ANNOTATED_CDS"/>
    <property type="molecule type" value="Genomic_DNA"/>
</dbReference>
<dbReference type="EMBL" id="AC117528">
    <property type="status" value="NOT_ANNOTATED_CDS"/>
    <property type="molecule type" value="Genomic_DNA"/>
</dbReference>
<dbReference type="EMBL" id="CH471084">
    <property type="protein sequence ID" value="EAW96025.1"/>
    <property type="molecule type" value="Genomic_DNA"/>
</dbReference>
<dbReference type="EMBL" id="BC035515">
    <property type="protein sequence ID" value="AAH35515.1"/>
    <property type="molecule type" value="mRNA"/>
</dbReference>
<dbReference type="EMBL" id="BF514032">
    <property type="status" value="NOT_ANNOTATED_CDS"/>
    <property type="molecule type" value="mRNA"/>
</dbReference>
<dbReference type="EMBL" id="AB020632">
    <property type="protein sequence ID" value="BAA74848.1"/>
    <property type="molecule type" value="mRNA"/>
</dbReference>
<dbReference type="EMBL" id="AK130941">
    <property type="protein sequence ID" value="BAC85469.1"/>
    <property type="status" value="ALT_INIT"/>
    <property type="molecule type" value="mRNA"/>
</dbReference>
<dbReference type="CCDS" id="CCDS4070.1">
    <molecule id="Q8IV33-2"/>
</dbReference>
<dbReference type="CCDS" id="CCDS93745.1">
    <molecule id="Q8IV33-1"/>
</dbReference>
<dbReference type="RefSeq" id="NP_001372644.1">
    <molecule id="Q8IV33-2"/>
    <property type="nucleotide sequence ID" value="NM_001385715.1"/>
</dbReference>
<dbReference type="RefSeq" id="NP_001372645.1">
    <molecule id="Q8IV33-2"/>
    <property type="nucleotide sequence ID" value="NM_001385716.1"/>
</dbReference>
<dbReference type="RefSeq" id="NP_001372646.1">
    <molecule id="Q8IV33-2"/>
    <property type="nucleotide sequence ID" value="NM_001385717.1"/>
</dbReference>
<dbReference type="RefSeq" id="NP_001372648.1">
    <molecule id="Q8IV33-2"/>
    <property type="nucleotide sequence ID" value="NM_001385719.1"/>
</dbReference>
<dbReference type="RefSeq" id="NP_001372649.1">
    <molecule id="Q8IV33-2"/>
    <property type="nucleotide sequence ID" value="NM_001385720.1"/>
</dbReference>
<dbReference type="RefSeq" id="NP_001372650.1">
    <molecule id="Q8IV33-2"/>
    <property type="nucleotide sequence ID" value="NM_001385721.1"/>
</dbReference>
<dbReference type="RefSeq" id="NP_001372651.1">
    <molecule id="Q8IV33-2"/>
    <property type="nucleotide sequence ID" value="NM_001385722.1"/>
</dbReference>
<dbReference type="RefSeq" id="NP_001372652.1">
    <molecule id="Q8IV33-2"/>
    <property type="nucleotide sequence ID" value="NM_001385723.1"/>
</dbReference>
<dbReference type="RefSeq" id="NP_001372657.1">
    <molecule id="Q8IV33-2"/>
    <property type="nucleotide sequence ID" value="NM_001385728.1"/>
</dbReference>
<dbReference type="RefSeq" id="NP_001372658.1">
    <molecule id="Q8IV33-2"/>
    <property type="nucleotide sequence ID" value="NM_001385729.1"/>
</dbReference>
<dbReference type="RefSeq" id="NP_001372659.1">
    <molecule id="Q8IV33-2"/>
    <property type="nucleotide sequence ID" value="NM_001385730.1"/>
</dbReference>
<dbReference type="RefSeq" id="NP_775936.1">
    <molecule id="Q8IV33-2"/>
    <property type="nucleotide sequence ID" value="NM_173665.3"/>
</dbReference>
<dbReference type="RefSeq" id="XP_016864865.1">
    <property type="nucleotide sequence ID" value="XM_017009376.1"/>
</dbReference>
<dbReference type="RefSeq" id="XP_016864866.1">
    <property type="nucleotide sequence ID" value="XM_017009377.1"/>
</dbReference>
<dbReference type="RefSeq" id="XP_047273068.1">
    <molecule id="Q8IV33-2"/>
    <property type="nucleotide sequence ID" value="XM_047417112.1"/>
</dbReference>
<dbReference type="RefSeq" id="XP_054208406.1">
    <molecule id="Q8IV33-2"/>
    <property type="nucleotide sequence ID" value="XM_054352431.1"/>
</dbReference>
<dbReference type="BioGRID" id="130154">
    <property type="interactions" value="11"/>
</dbReference>
<dbReference type="FunCoup" id="Q8IV33">
    <property type="interactions" value="726"/>
</dbReference>
<dbReference type="IntAct" id="Q8IV33">
    <property type="interactions" value="5"/>
</dbReference>
<dbReference type="STRING" id="9606.ENSP00000331385"/>
<dbReference type="GlyGen" id="Q8IV33">
    <property type="glycosylation" value="1 site, 1 O-linked glycan (1 site)"/>
</dbReference>
<dbReference type="iPTMnet" id="Q8IV33"/>
<dbReference type="PhosphoSitePlus" id="Q8IV33"/>
<dbReference type="BioMuta" id="KIAA0825"/>
<dbReference type="DMDM" id="300669631"/>
<dbReference type="jPOST" id="Q8IV33"/>
<dbReference type="MassIVE" id="Q8IV33"/>
<dbReference type="PaxDb" id="9606-ENSP00000331385"/>
<dbReference type="PeptideAtlas" id="Q8IV33"/>
<dbReference type="ProteomicsDB" id="70647">
    <molecule id="Q8IV33-1"/>
</dbReference>
<dbReference type="ProteomicsDB" id="70648">
    <molecule id="Q8IV33-2"/>
</dbReference>
<dbReference type="ProteomicsDB" id="70649">
    <molecule id="Q8IV33-3"/>
</dbReference>
<dbReference type="Pumba" id="Q8IV33"/>
<dbReference type="Antibodypedia" id="24939">
    <property type="antibodies" value="37 antibodies from 11 providers"/>
</dbReference>
<dbReference type="DNASU" id="285600"/>
<dbReference type="Ensembl" id="ENST00000329378.7">
    <molecule id="Q8IV33-2"/>
    <property type="protein sequence ID" value="ENSP00000331385.6"/>
    <property type="gene ID" value="ENSG00000185261.16"/>
</dbReference>
<dbReference type="Ensembl" id="ENST00000513200.7">
    <molecule id="Q8IV33-1"/>
    <property type="protein sequence ID" value="ENSP00000424618.2"/>
    <property type="gene ID" value="ENSG00000185261.16"/>
</dbReference>
<dbReference type="GeneID" id="285600"/>
<dbReference type="KEGG" id="hsa:285600"/>
<dbReference type="UCSC" id="uc003kkp.3">
    <molecule id="Q8IV33-1"/>
    <property type="organism name" value="human"/>
</dbReference>
<dbReference type="AGR" id="HGNC:28532"/>
<dbReference type="CTD" id="285600"/>
<dbReference type="DisGeNET" id="285600"/>
<dbReference type="GeneCards" id="KIAA0825"/>
<dbReference type="HGNC" id="HGNC:28532">
    <property type="gene designation" value="KIAA0825"/>
</dbReference>
<dbReference type="HPA" id="ENSG00000185261">
    <property type="expression patterns" value="Low tissue specificity"/>
</dbReference>
<dbReference type="MalaCards" id="KIAA0825"/>
<dbReference type="MIM" id="617266">
    <property type="type" value="gene"/>
</dbReference>
<dbReference type="MIM" id="618498">
    <property type="type" value="phenotype"/>
</dbReference>
<dbReference type="neXtProt" id="NX_Q8IV33"/>
<dbReference type="OpenTargets" id="ENSG00000185261"/>
<dbReference type="Orphanet" id="93334">
    <property type="disease" value="Postaxial polydactyly type A"/>
</dbReference>
<dbReference type="PharmGKB" id="PA162380116"/>
<dbReference type="VEuPathDB" id="HostDB:ENSG00000185261"/>
<dbReference type="eggNOG" id="ENOG502QUZJ">
    <property type="taxonomic scope" value="Eukaryota"/>
</dbReference>
<dbReference type="GeneTree" id="ENSGT00610000086112"/>
<dbReference type="HOGENOM" id="CLU_074367_0_0_1"/>
<dbReference type="InParanoid" id="Q8IV33"/>
<dbReference type="OMA" id="WEMKKDE"/>
<dbReference type="OrthoDB" id="10007406at2759"/>
<dbReference type="PAN-GO" id="Q8IV33">
    <property type="GO annotations" value="0 GO annotations based on evolutionary models"/>
</dbReference>
<dbReference type="PhylomeDB" id="Q8IV33"/>
<dbReference type="TreeFam" id="TF332563"/>
<dbReference type="PathwayCommons" id="Q8IV33"/>
<dbReference type="SignaLink" id="Q8IV33"/>
<dbReference type="BioGRID-ORCS" id="285600">
    <property type="hits" value="15 hits in 1152 CRISPR screens"/>
</dbReference>
<dbReference type="ChiTaRS" id="KIAA0825">
    <property type="organism name" value="human"/>
</dbReference>
<dbReference type="GenomeRNAi" id="285600"/>
<dbReference type="Pharos" id="Q8IV33">
    <property type="development level" value="Tdark"/>
</dbReference>
<dbReference type="PRO" id="PR:Q8IV33"/>
<dbReference type="Proteomes" id="UP000005640">
    <property type="component" value="Chromosome 5"/>
</dbReference>
<dbReference type="RNAct" id="Q8IV33">
    <property type="molecule type" value="protein"/>
</dbReference>
<dbReference type="Bgee" id="ENSG00000185261">
    <property type="expression patterns" value="Expressed in male germ line stem cell (sensu Vertebrata) in testis and 115 other cell types or tissues"/>
</dbReference>
<dbReference type="InterPro" id="IPR027993">
    <property type="entry name" value="DUF4495"/>
</dbReference>
<dbReference type="PANTHER" id="PTHR33960">
    <property type="entry name" value="SIMILAR TO KIAA0825 PROTEIN"/>
    <property type="match status" value="1"/>
</dbReference>
<dbReference type="PANTHER" id="PTHR33960:SF1">
    <property type="entry name" value="SIMILAR TO KIAA0825 PROTEIN"/>
    <property type="match status" value="1"/>
</dbReference>
<dbReference type="Pfam" id="PF14906">
    <property type="entry name" value="DUF4495"/>
    <property type="match status" value="1"/>
</dbReference>
<name>K0825_HUMAN</name>
<protein>
    <recommendedName>
        <fullName>Uncharacterized protein KIAA0825</fullName>
    </recommendedName>
</protein>
<proteinExistence type="evidence at protein level"/>
<accession>Q8IV33</accession>
<accession>A0A088AWM3</accession>
<accession>O94914</accession>
<accession>Q6ZNN2</accession>
<organism>
    <name type="scientific">Homo sapiens</name>
    <name type="common">Human</name>
    <dbReference type="NCBI Taxonomy" id="9606"/>
    <lineage>
        <taxon>Eukaryota</taxon>
        <taxon>Metazoa</taxon>
        <taxon>Chordata</taxon>
        <taxon>Craniata</taxon>
        <taxon>Vertebrata</taxon>
        <taxon>Euteleostomi</taxon>
        <taxon>Mammalia</taxon>
        <taxon>Eutheria</taxon>
        <taxon>Euarchontoglires</taxon>
        <taxon>Primates</taxon>
        <taxon>Haplorrhini</taxon>
        <taxon>Catarrhini</taxon>
        <taxon>Hominidae</taxon>
        <taxon>Homo</taxon>
    </lineage>
</organism>
<gene>
    <name type="primary">KIAA0825</name>
    <name type="synonym">C5orf36</name>
</gene>
<keyword id="KW-0025">Alternative splicing</keyword>
<keyword id="KW-0225">Disease variant</keyword>
<keyword id="KW-1267">Proteomics identification</keyword>
<keyword id="KW-1185">Reference proteome</keyword>
<feature type="chain" id="PRO_0000316781" description="Uncharacterized protein KIAA0825">
    <location>
        <begin position="1"/>
        <end position="1275"/>
    </location>
</feature>
<feature type="splice variant" id="VSP_039414" description="In isoform 2." evidence="3">
    <original>V</original>
    <variation>G</variation>
    <location>
        <position position="324"/>
    </location>
</feature>
<feature type="splice variant" id="VSP_039415" description="In isoform 2." evidence="3">
    <location>
        <begin position="325"/>
        <end position="1275"/>
    </location>
</feature>
<feature type="splice variant" id="VSP_039416" description="In isoform 3." evidence="2">
    <original>K</original>
    <variation>KRTFQE</variation>
    <location>
        <position position="833"/>
    </location>
</feature>
<feature type="splice variant" id="VSP_039417" description="In isoform 3." evidence="2">
    <original>VSTCVEYELEVIRCLRLALTDAIKDTVQQIVSVMSSRRNCETNLNK</original>
    <variation>GMRHLLFVKEMFYRYLYVPLKMFRSCIDTGFAESVVGESLPYIFSV</variation>
    <location>
        <begin position="888"/>
        <end position="933"/>
    </location>
</feature>
<feature type="splice variant" id="VSP_039418" description="In isoform 3." evidence="2">
    <location>
        <begin position="934"/>
        <end position="1275"/>
    </location>
</feature>
<feature type="sequence variant" id="VAR_038391" description="In dbSNP:rs2044909.">
    <original>K</original>
    <variation>E</variation>
    <location>
        <position position="46"/>
    </location>
</feature>
<feature type="sequence variant" id="VAR_083052" description="In PAPA10." evidence="1">
    <location>
        <begin position="725"/>
        <end position="1275"/>
    </location>
</feature>
<feature type="sequence conflict" description="In Ref. 5; BAC85469." evidence="4" ref="5">
    <original>K</original>
    <variation>E</variation>
    <location>
        <position position="1106"/>
    </location>
</feature>
<feature type="sequence conflict" description="In Ref. 5; BAC85469." evidence="4" ref="5">
    <original>N</original>
    <variation>D</variation>
    <location>
        <position position="1271"/>
    </location>
</feature>